<proteinExistence type="evidence at protein level"/>
<keyword id="KW-0002">3D-structure</keyword>
<keyword id="KW-0067">ATP-binding</keyword>
<keyword id="KW-0436">Ligase</keyword>
<keyword id="KW-0547">Nucleotide-binding</keyword>
<keyword id="KW-0648">Protein biosynthesis</keyword>
<keyword id="KW-1185">Reference proteome</keyword>
<gene>
    <name evidence="1" type="primary">gatB</name>
    <name type="ordered locus">TTHA0366</name>
</gene>
<comment type="function">
    <text>Allows the formation of correctly charged Asn-tRNA(Asn) or Gln-tRNA(Gln) through the transamidation of misacylated Asp-tRNA(Asn) or Glu-tRNA(Gln) in organisms which lack either or both of asparaginyl-tRNA or glutaminyl-tRNA synthetases. The reaction takes place in the presence of glutamine and ATP through an activated phospho-Asp-tRNA(Asn) or phospho-Glu-tRNA(Gln).</text>
</comment>
<comment type="catalytic activity">
    <reaction evidence="1">
        <text>L-glutamyl-tRNA(Gln) + L-glutamine + ATP + H2O = L-glutaminyl-tRNA(Gln) + L-glutamate + ADP + phosphate + H(+)</text>
        <dbReference type="Rhea" id="RHEA:17521"/>
        <dbReference type="Rhea" id="RHEA-COMP:9681"/>
        <dbReference type="Rhea" id="RHEA-COMP:9684"/>
        <dbReference type="ChEBI" id="CHEBI:15377"/>
        <dbReference type="ChEBI" id="CHEBI:15378"/>
        <dbReference type="ChEBI" id="CHEBI:29985"/>
        <dbReference type="ChEBI" id="CHEBI:30616"/>
        <dbReference type="ChEBI" id="CHEBI:43474"/>
        <dbReference type="ChEBI" id="CHEBI:58359"/>
        <dbReference type="ChEBI" id="CHEBI:78520"/>
        <dbReference type="ChEBI" id="CHEBI:78521"/>
        <dbReference type="ChEBI" id="CHEBI:456216"/>
    </reaction>
</comment>
<comment type="catalytic activity">
    <reaction evidence="1">
        <text>L-aspartyl-tRNA(Asn) + L-glutamine + ATP + H2O = L-asparaginyl-tRNA(Asn) + L-glutamate + ADP + phosphate + 2 H(+)</text>
        <dbReference type="Rhea" id="RHEA:14513"/>
        <dbReference type="Rhea" id="RHEA-COMP:9674"/>
        <dbReference type="Rhea" id="RHEA-COMP:9677"/>
        <dbReference type="ChEBI" id="CHEBI:15377"/>
        <dbReference type="ChEBI" id="CHEBI:15378"/>
        <dbReference type="ChEBI" id="CHEBI:29985"/>
        <dbReference type="ChEBI" id="CHEBI:30616"/>
        <dbReference type="ChEBI" id="CHEBI:43474"/>
        <dbReference type="ChEBI" id="CHEBI:58359"/>
        <dbReference type="ChEBI" id="CHEBI:78515"/>
        <dbReference type="ChEBI" id="CHEBI:78516"/>
        <dbReference type="ChEBI" id="CHEBI:456216"/>
    </reaction>
</comment>
<comment type="subunit">
    <text evidence="1">Heterotrimer of A, B and C subunits.</text>
</comment>
<comment type="similarity">
    <text evidence="1">Belongs to the GatB/GatE family. GatB subfamily.</text>
</comment>
<accession>Q9LCX2</accession>
<accession>Q5SLC7</accession>
<evidence type="ECO:0000255" key="1">
    <source>
        <dbReference type="HAMAP-Rule" id="MF_00121"/>
    </source>
</evidence>
<evidence type="ECO:0007829" key="2">
    <source>
        <dbReference type="PDB" id="3KFU"/>
    </source>
</evidence>
<dbReference type="EC" id="6.3.5.-" evidence="1"/>
<dbReference type="EMBL" id="AF202448">
    <property type="protein sequence ID" value="AAF91177.1"/>
    <property type="molecule type" value="Genomic_DNA"/>
</dbReference>
<dbReference type="EMBL" id="AP008226">
    <property type="protein sequence ID" value="BAD70189.1"/>
    <property type="molecule type" value="Genomic_DNA"/>
</dbReference>
<dbReference type="RefSeq" id="WP_011227883.1">
    <property type="nucleotide sequence ID" value="NC_006461.1"/>
</dbReference>
<dbReference type="RefSeq" id="YP_143632.1">
    <property type="nucleotide sequence ID" value="NC_006461.1"/>
</dbReference>
<dbReference type="PDB" id="3KFU">
    <property type="method" value="X-ray"/>
    <property type="resolution" value="3.00 A"/>
    <property type="chains" value="F/I=1-396"/>
</dbReference>
<dbReference type="PDBsum" id="3KFU"/>
<dbReference type="SMR" id="Q9LCX2"/>
<dbReference type="EnsemblBacteria" id="BAD70189">
    <property type="protein sequence ID" value="BAD70189"/>
    <property type="gene ID" value="BAD70189"/>
</dbReference>
<dbReference type="GeneID" id="3169083"/>
<dbReference type="KEGG" id="ttj:TTHA0366"/>
<dbReference type="PATRIC" id="fig|300852.9.peg.366"/>
<dbReference type="eggNOG" id="COG0064">
    <property type="taxonomic scope" value="Bacteria"/>
</dbReference>
<dbReference type="HOGENOM" id="CLU_019240_0_0_0"/>
<dbReference type="PhylomeDB" id="Q9LCX2"/>
<dbReference type="EvolutionaryTrace" id="Q9LCX2"/>
<dbReference type="Proteomes" id="UP000000532">
    <property type="component" value="Chromosome"/>
</dbReference>
<dbReference type="GO" id="GO:0050566">
    <property type="term" value="F:asparaginyl-tRNA synthase (glutamine-hydrolyzing) activity"/>
    <property type="evidence" value="ECO:0007669"/>
    <property type="project" value="RHEA"/>
</dbReference>
<dbReference type="GO" id="GO:0005524">
    <property type="term" value="F:ATP binding"/>
    <property type="evidence" value="ECO:0007669"/>
    <property type="project" value="UniProtKB-KW"/>
</dbReference>
<dbReference type="GO" id="GO:0050567">
    <property type="term" value="F:glutaminyl-tRNA synthase (glutamine-hydrolyzing) activity"/>
    <property type="evidence" value="ECO:0007669"/>
    <property type="project" value="UniProtKB-UniRule"/>
</dbReference>
<dbReference type="GO" id="GO:0070681">
    <property type="term" value="P:glutaminyl-tRNAGln biosynthesis via transamidation"/>
    <property type="evidence" value="ECO:0007669"/>
    <property type="project" value="TreeGrafter"/>
</dbReference>
<dbReference type="GO" id="GO:0006412">
    <property type="term" value="P:translation"/>
    <property type="evidence" value="ECO:0007669"/>
    <property type="project" value="UniProtKB-UniRule"/>
</dbReference>
<dbReference type="FunFam" id="1.10.10.410:FF:000001">
    <property type="entry name" value="Aspartyl/glutamyl-tRNA(Asn/Gln) amidotransferase subunit B"/>
    <property type="match status" value="1"/>
</dbReference>
<dbReference type="Gene3D" id="1.10.10.410">
    <property type="match status" value="1"/>
</dbReference>
<dbReference type="HAMAP" id="MF_00121">
    <property type="entry name" value="GatB"/>
    <property type="match status" value="1"/>
</dbReference>
<dbReference type="InterPro" id="IPR017959">
    <property type="entry name" value="Asn/Gln-tRNA_amidoTrfase_suB/E"/>
</dbReference>
<dbReference type="InterPro" id="IPR006075">
    <property type="entry name" value="Asn/Gln-tRNA_Trfase_suB/E_cat"/>
</dbReference>
<dbReference type="InterPro" id="IPR018027">
    <property type="entry name" value="Asn/Gln_amidotransferase"/>
</dbReference>
<dbReference type="InterPro" id="IPR003789">
    <property type="entry name" value="Asn/Gln_tRNA_amidoTrase-B-like"/>
</dbReference>
<dbReference type="InterPro" id="IPR004413">
    <property type="entry name" value="GatB"/>
</dbReference>
<dbReference type="InterPro" id="IPR023168">
    <property type="entry name" value="GatB_Yqey_C_2"/>
</dbReference>
<dbReference type="InterPro" id="IPR017958">
    <property type="entry name" value="Gln-tRNA_amidoTrfase_suB_CS"/>
</dbReference>
<dbReference type="InterPro" id="IPR014746">
    <property type="entry name" value="Gln_synth/guanido_kin_cat_dom"/>
</dbReference>
<dbReference type="NCBIfam" id="TIGR00133">
    <property type="entry name" value="gatB"/>
    <property type="match status" value="1"/>
</dbReference>
<dbReference type="NCBIfam" id="NF004012">
    <property type="entry name" value="PRK05477.1-2"/>
    <property type="match status" value="1"/>
</dbReference>
<dbReference type="NCBIfam" id="NF004014">
    <property type="entry name" value="PRK05477.1-4"/>
    <property type="match status" value="1"/>
</dbReference>
<dbReference type="PANTHER" id="PTHR11659">
    <property type="entry name" value="GLUTAMYL-TRNA GLN AMIDOTRANSFERASE SUBUNIT B MITOCHONDRIAL AND PROKARYOTIC PET112-RELATED"/>
    <property type="match status" value="1"/>
</dbReference>
<dbReference type="PANTHER" id="PTHR11659:SF0">
    <property type="entry name" value="GLUTAMYL-TRNA(GLN) AMIDOTRANSFERASE SUBUNIT B, MITOCHONDRIAL"/>
    <property type="match status" value="1"/>
</dbReference>
<dbReference type="Pfam" id="PF02934">
    <property type="entry name" value="GatB_N"/>
    <property type="match status" value="1"/>
</dbReference>
<dbReference type="Pfam" id="PF02637">
    <property type="entry name" value="GatB_Yqey"/>
    <property type="match status" value="1"/>
</dbReference>
<dbReference type="SMART" id="SM00845">
    <property type="entry name" value="GatB_Yqey"/>
    <property type="match status" value="1"/>
</dbReference>
<dbReference type="SUPFAM" id="SSF89095">
    <property type="entry name" value="GatB/YqeY motif"/>
    <property type="match status" value="1"/>
</dbReference>
<dbReference type="SUPFAM" id="SSF55931">
    <property type="entry name" value="Glutamine synthetase/guanido kinase"/>
    <property type="match status" value="1"/>
</dbReference>
<dbReference type="PROSITE" id="PS01234">
    <property type="entry name" value="GATB"/>
    <property type="match status" value="1"/>
</dbReference>
<sequence length="469" mass="52236">MYEAVIGLEVHLHLKTRTKMFCGCRADYFGAEPNTHTCPVCLGLPGALPVPNRVAVEHGLRLALALGAEVPERLVFHRKNYFYPDLPKNYQISQYDLPLGRGGSLPLGERRVRIKRLHLEEDAGKSLHLEGRTLLDLNRAGSPLIELVTEPDLKTPEEARLFLQRIQALVQTLGISDASPEEGKLRADVNVSVRRVGEPLGTKVEIKNLNSFKSVQRALEYEIRRQTEILRRGEKVKQATMGFEEGSGKTYPMRTKEEEADYRYFPEPDLPPVAIPRDWLEEVRRSLPELPWEKEARYRALGIKEKDAEVLAYTPSLARFLDQALPLGLASPQALANWLLADVAGLLHERGLRLEETRLSPEGLARLVGLFERGEVTSRVAKSLLPEVLEGQDPEALVRERGLKVVADEGALKALVAEAIAAMPEAAESVRQGKVKALDALVGQVMRKTRGQARPDLVRRLLLEALGVG</sequence>
<feature type="chain" id="PRO_0000148858" description="Aspartyl/glutamyl-tRNA(Asn/Gln) amidotransferase subunit B">
    <location>
        <begin position="1"/>
        <end position="469"/>
    </location>
</feature>
<feature type="strand" evidence="2">
    <location>
        <begin position="4"/>
        <end position="14"/>
    </location>
</feature>
<feature type="strand" evidence="2">
    <location>
        <begin position="20"/>
        <end position="22"/>
    </location>
</feature>
<feature type="turn" evidence="2">
    <location>
        <begin position="39"/>
        <end position="43"/>
    </location>
</feature>
<feature type="helix" evidence="2">
    <location>
        <begin position="53"/>
        <end position="66"/>
    </location>
</feature>
<feature type="strand" evidence="2">
    <location>
        <begin position="72"/>
        <end position="74"/>
    </location>
</feature>
<feature type="strand" evidence="2">
    <location>
        <begin position="77"/>
        <end position="80"/>
    </location>
</feature>
<feature type="strand" evidence="2">
    <location>
        <begin position="89"/>
        <end position="93"/>
    </location>
</feature>
<feature type="strand" evidence="2">
    <location>
        <begin position="95"/>
        <end position="97"/>
    </location>
</feature>
<feature type="strand" evidence="2">
    <location>
        <begin position="99"/>
        <end position="102"/>
    </location>
</feature>
<feature type="strand" evidence="2">
    <location>
        <begin position="104"/>
        <end position="107"/>
    </location>
</feature>
<feature type="strand" evidence="2">
    <location>
        <begin position="110"/>
        <end position="121"/>
    </location>
</feature>
<feature type="strand" evidence="2">
    <location>
        <begin position="125"/>
        <end position="129"/>
    </location>
</feature>
<feature type="strand" evidence="2">
    <location>
        <begin position="132"/>
        <end position="136"/>
    </location>
</feature>
<feature type="strand" evidence="2">
    <location>
        <begin position="143"/>
        <end position="149"/>
    </location>
</feature>
<feature type="helix" evidence="2">
    <location>
        <begin position="156"/>
        <end position="173"/>
    </location>
</feature>
<feature type="helix" evidence="2">
    <location>
        <begin position="180"/>
        <end position="182"/>
    </location>
</feature>
<feature type="strand" evidence="2">
    <location>
        <begin position="185"/>
        <end position="193"/>
    </location>
</feature>
<feature type="strand" evidence="2">
    <location>
        <begin position="196"/>
        <end position="199"/>
    </location>
</feature>
<feature type="strand" evidence="2">
    <location>
        <begin position="204"/>
        <end position="209"/>
    </location>
</feature>
<feature type="helix" evidence="2">
    <location>
        <begin position="212"/>
        <end position="230"/>
    </location>
</feature>
<feature type="turn" evidence="2">
    <location>
        <begin position="245"/>
        <end position="248"/>
    </location>
</feature>
<feature type="helix" evidence="2">
    <location>
        <begin position="277"/>
        <end position="284"/>
    </location>
</feature>
<feature type="helix" evidence="2">
    <location>
        <begin position="291"/>
        <end position="298"/>
    </location>
</feature>
<feature type="turn" evidence="2">
    <location>
        <begin position="299"/>
        <end position="302"/>
    </location>
</feature>
<feature type="helix" evidence="2">
    <location>
        <begin position="305"/>
        <end position="312"/>
    </location>
</feature>
<feature type="helix" evidence="2">
    <location>
        <begin position="315"/>
        <end position="324"/>
    </location>
</feature>
<feature type="strand" evidence="2">
    <location>
        <begin position="327"/>
        <end position="330"/>
    </location>
</feature>
<feature type="helix" evidence="2">
    <location>
        <begin position="332"/>
        <end position="340"/>
    </location>
</feature>
<feature type="helix" evidence="2">
    <location>
        <begin position="342"/>
        <end position="350"/>
    </location>
</feature>
<feature type="helix" evidence="2">
    <location>
        <begin position="361"/>
        <end position="372"/>
    </location>
</feature>
<feature type="helix" evidence="2">
    <location>
        <begin position="378"/>
        <end position="388"/>
    </location>
</feature>
<feature type="turn" evidence="2">
    <location>
        <begin position="389"/>
        <end position="391"/>
    </location>
</feature>
<protein>
    <recommendedName>
        <fullName evidence="1">Aspartyl/glutamyl-tRNA(Asn/Gln) amidotransferase subunit B</fullName>
        <shortName evidence="1">Asp/Glu-ADT subunit B</shortName>
        <ecNumber evidence="1">6.3.5.-</ecNumber>
    </recommendedName>
</protein>
<organism>
    <name type="scientific">Thermus thermophilus (strain ATCC 27634 / DSM 579 / HB8)</name>
    <dbReference type="NCBI Taxonomy" id="300852"/>
    <lineage>
        <taxon>Bacteria</taxon>
        <taxon>Thermotogati</taxon>
        <taxon>Deinococcota</taxon>
        <taxon>Deinococci</taxon>
        <taxon>Thermales</taxon>
        <taxon>Thermaceae</taxon>
        <taxon>Thermus</taxon>
    </lineage>
</organism>
<reference key="1">
    <citation type="journal article" date="2000" name="FEBS Lett.">
        <title>The heterotrimeric Thermus thermophilus Asp-tRNA(Asn) amidotransferase can also generate Gln-tRNA(Gln).</title>
        <authorList>
            <person name="Becker H.D."/>
            <person name="Min B."/>
            <person name="Jacobi C."/>
            <person name="Raczniak G."/>
            <person name="Pelaschier J."/>
            <person name="Roy H."/>
            <person name="Klein S."/>
            <person name="Kern D."/>
            <person name="Soell D."/>
        </authorList>
    </citation>
    <scope>NUCLEOTIDE SEQUENCE [GENOMIC DNA]</scope>
    <scope>CHARACTERIZATION</scope>
</reference>
<reference key="2">
    <citation type="submission" date="2004-11" db="EMBL/GenBank/DDBJ databases">
        <title>Complete genome sequence of Thermus thermophilus HB8.</title>
        <authorList>
            <person name="Masui R."/>
            <person name="Kurokawa K."/>
            <person name="Nakagawa N."/>
            <person name="Tokunaga F."/>
            <person name="Koyama Y."/>
            <person name="Shibata T."/>
            <person name="Oshima T."/>
            <person name="Yokoyama S."/>
            <person name="Yasunaga T."/>
            <person name="Kuramitsu S."/>
        </authorList>
    </citation>
    <scope>NUCLEOTIDE SEQUENCE [LARGE SCALE GENOMIC DNA]</scope>
    <source>
        <strain>ATCC 27634 / DSM 579 / HB8</strain>
    </source>
</reference>
<name>GATB_THET8</name>